<keyword id="KW-0002">3D-structure</keyword>
<keyword id="KW-0945">Host-virus interaction</keyword>
<keyword id="KW-1090">Inhibition of host innate immune response by virus</keyword>
<keyword id="KW-1114">Inhibition of host interferon signaling pathway by virus</keyword>
<keyword id="KW-1102">Inhibition of host PKR by virus</keyword>
<keyword id="KW-0922">Interferon antiviral system evasion</keyword>
<keyword id="KW-1185">Reference proteome</keyword>
<keyword id="KW-0694">RNA-binding</keyword>
<keyword id="KW-0899">Viral immunoevasion</keyword>
<reference key="1">
    <citation type="journal article" date="1988" name="J. Gen. Virol.">
        <title>Non-essential genes in the vaccinia virus HindIII K fragment: a gene related to serine protease inhibitors and a gene related to the 37K vaccinia virus major envelope antigen.</title>
        <authorList>
            <person name="Boursnell M.E.G."/>
            <person name="Foulds I.J."/>
            <person name="Campbell J.I."/>
            <person name="Binns M.M."/>
        </authorList>
    </citation>
    <scope>NUCLEOTIDE SEQUENCE [GENOMIC DNA]</scope>
</reference>
<reference key="2">
    <citation type="submission" date="2003-02" db="EMBL/GenBank/DDBJ databases">
        <title>Sequencing of the coding region of Vaccinia-WR to an average 9-fold redundancy and an error rate of 0.16/10kb.</title>
        <authorList>
            <person name="Esposito J.J."/>
            <person name="Frace A.M."/>
            <person name="Sammons S.A."/>
            <person name="Olsen-Rasmussen M."/>
            <person name="Osborne J."/>
            <person name="Wohlhueter R."/>
        </authorList>
    </citation>
    <scope>NUCLEOTIDE SEQUENCE [LARGE SCALE GENOMIC DNA]</scope>
</reference>
<reference key="3">
    <citation type="journal article" date="1993" name="J. Biol. Chem.">
        <title>Recombinant vaccinia virus K3L gene product prevents activation of double-stranded RNA-dependent, initiation factor 2 alpha-specific protein kinase.</title>
        <authorList>
            <person name="Carroll K."/>
            <person name="Elroy-Stein O."/>
            <person name="Moss B."/>
            <person name="Jagus R."/>
        </authorList>
    </citation>
    <scope>FUNCTION</scope>
    <source>
        <strain>Wisconsin</strain>
    </source>
</reference>
<reference key="4">
    <citation type="journal article" date="1997" name="Mol. Cell. Biol.">
        <title>Regulation of the protein kinase PKR by the vaccinia virus pseudosubstrate inhibitor K3L is dependent on residues conserved between the K3L protein and the PKR substrate eIF2alpha.</title>
        <authorList>
            <person name="Kawagishi-Kobayashi M."/>
            <person name="Silverman J.B."/>
            <person name="Ung T.L."/>
            <person name="Dever T.E."/>
        </authorList>
    </citation>
    <scope>FUNCTION</scope>
    <scope>DOMAIN</scope>
    <scope>MUTAGENESIS OF HIS-47; LYS-74; TYR-76 AND ASP-78</scope>
</reference>
<reference key="5">
    <citation type="journal article" date="2008" name="Proc. Natl. Acad. Sci. U.S.A.">
        <title>Protein kinase PKR mutants resistant to the poxvirus pseudosubstrate K3L protein.</title>
        <authorList>
            <person name="Seo E.J."/>
            <person name="Liu F."/>
            <person name="Kawagishi-Kobayashi M."/>
            <person name="Ung T.L."/>
            <person name="Cao C."/>
            <person name="Dar A.C."/>
            <person name="Sicheri F."/>
            <person name="Dever T.E."/>
        </authorList>
    </citation>
    <scope>INTERACTION WITH HOST EIF2AK2/PKR</scope>
</reference>
<reference key="6">
    <citation type="journal article" date="2020" name="Virology">
        <title>Poxvirus encoded eIF2alpha homolog, K3 family proteins, is a key determinant of poxvirus host species specificity.</title>
        <authorList>
            <person name="Cao J."/>
            <person name="Varga J."/>
            <person name="Deschambault Y."/>
        </authorList>
    </citation>
    <scope>FUNCTION</scope>
</reference>
<reference key="7">
    <citation type="journal article" date="2002" name="Mol. Cell">
        <title>X-ray crystal structure and functional analysis of vaccinia virus K3L reveals molecular determinants for PKR subversion and substrate recognition.</title>
        <authorList>
            <person name="Dar A.C."/>
            <person name="Sicheri F."/>
        </authorList>
    </citation>
    <scope>X-RAY CRYSTALLOGRAPHY (1.8 ANGSTROMS)</scope>
</reference>
<sequence>MLAFCYSLPNAGDVIKGRVYEKDYALYIYLFDYPHFEAILAESVKMHMDRYVEYRDKLVGKTVKVKVIRVDYTKGYIDVNYKRMCRHQ</sequence>
<organism>
    <name type="scientific">Vaccinia virus (strain Western Reserve)</name>
    <name type="common">VACV</name>
    <name type="synonym">Vaccinia virus (strain WR)</name>
    <dbReference type="NCBI Taxonomy" id="10254"/>
    <lineage>
        <taxon>Viruses</taxon>
        <taxon>Varidnaviria</taxon>
        <taxon>Bamfordvirae</taxon>
        <taxon>Nucleocytoviricota</taxon>
        <taxon>Pokkesviricetes</taxon>
        <taxon>Chitovirales</taxon>
        <taxon>Poxviridae</taxon>
        <taxon>Chordopoxvirinae</taxon>
        <taxon>Orthopoxvirus</taxon>
        <taxon>Vaccinia virus</taxon>
    </lineage>
</organism>
<comment type="function">
    <text evidence="3 4 5">Viral mimic of EIF2S1/eIF-2alpha that acts as a pseudosubstrate for EIF2AK2/PKR kinase (PubMed:8099586, PubMed:9199350). Inhibits therefore EIF2S1/eIF-2alpha phosphorylation by host EIF2AK2/PKR kinase and prevents protein synthesis shutoff (PubMed:8099586, PubMed:9199350). Determinant of host species specificity (PubMed:32056708).</text>
</comment>
<comment type="subunit">
    <text evidence="2">Interacts with host EIF2AK2/PKR kinase.</text>
</comment>
<comment type="domain">
    <text evidence="5">The C-terminus is involved in the inhibition of host EIF2AK2/PKR kinase.</text>
</comment>
<comment type="similarity">
    <text evidence="6">Belongs to the poxviridae K3 protein family.</text>
</comment>
<proteinExistence type="evidence at protein level"/>
<organismHost>
    <name type="scientific">Bos taurus</name>
    <name type="common">Bovine</name>
    <dbReference type="NCBI Taxonomy" id="9913"/>
</organismHost>
<gene>
    <name type="ordered locus">VACWR034</name>
    <name type="ORF">K2L</name>
    <name type="ORF">K3L</name>
</gene>
<protein>
    <recommendedName>
        <fullName>Protein K3</fullName>
    </recommendedName>
    <alternativeName>
        <fullName>Protein K2</fullName>
    </alternativeName>
</protein>
<name>PG041_VACCW</name>
<feature type="chain" id="PRO_0000099599" description="Protein K3">
    <location>
        <begin position="1"/>
        <end position="88"/>
    </location>
</feature>
<feature type="domain" description="S1 motif">
    <location>
        <begin position="8"/>
        <end position="82"/>
    </location>
</feature>
<feature type="region of interest" description="Binding to host EIF2AK2/PKR" evidence="1">
    <location>
        <begin position="43"/>
        <end position="53"/>
    </location>
</feature>
<feature type="region of interest" description="Binding to host EIF2AK2/PKR" evidence="1">
    <location>
        <begin position="74"/>
        <end position="79"/>
    </location>
</feature>
<feature type="site" description="Involved in host species specificity" evidence="3">
    <location>
        <position position="45"/>
    </location>
</feature>
<feature type="mutagenesis site" description="Increased inhibition of host EIF2AK2/PKR kinase." evidence="5">
    <original>H</original>
    <variation>R</variation>
    <location>
        <position position="47"/>
    </location>
</feature>
<feature type="mutagenesis site" description="Complete loss of inhibition of host EIF2AK2/PKR kinase." evidence="5">
    <original>K</original>
    <variation>A</variation>
    <location>
        <position position="74"/>
    </location>
</feature>
<feature type="mutagenesis site" description="Complete loss of inhibition of host EIF2AK2/PKR kinase." evidence="5">
    <original>Y</original>
    <variation>A</variation>
    <location>
        <position position="76"/>
    </location>
</feature>
<feature type="mutagenesis site" description="Complete loss of inhibition of host EIF2AK2/PKR kinase." evidence="5">
    <original>D</original>
    <variation>A</variation>
    <location>
        <position position="78"/>
    </location>
</feature>
<feature type="strand" evidence="7">
    <location>
        <begin position="14"/>
        <end position="22"/>
    </location>
</feature>
<feature type="strand" evidence="7">
    <location>
        <begin position="25"/>
        <end position="30"/>
    </location>
</feature>
<feature type="strand" evidence="7">
    <location>
        <begin position="36"/>
        <end position="40"/>
    </location>
</feature>
<feature type="helix" evidence="7">
    <location>
        <begin position="41"/>
        <end position="43"/>
    </location>
</feature>
<feature type="helix" evidence="7">
    <location>
        <begin position="48"/>
        <end position="58"/>
    </location>
</feature>
<feature type="strand" evidence="7">
    <location>
        <begin position="62"/>
        <end position="71"/>
    </location>
</feature>
<feature type="turn" evidence="7">
    <location>
        <begin position="72"/>
        <end position="75"/>
    </location>
</feature>
<feature type="strand" evidence="7">
    <location>
        <begin position="76"/>
        <end position="84"/>
    </location>
</feature>
<dbReference type="EMBL" id="D00382">
    <property type="protein sequence ID" value="BAA00288.1"/>
    <property type="molecule type" value="Genomic_DNA"/>
</dbReference>
<dbReference type="EMBL" id="AY243312">
    <property type="protein sequence ID" value="AAO89313.1"/>
    <property type="molecule type" value="Genomic_DNA"/>
</dbReference>
<dbReference type="PIR" id="JS0212">
    <property type="entry name" value="WMVZK2"/>
</dbReference>
<dbReference type="RefSeq" id="YP_232916.1">
    <property type="nucleotide sequence ID" value="NC_006998.1"/>
</dbReference>
<dbReference type="PDB" id="1LUZ">
    <property type="method" value="X-ray"/>
    <property type="resolution" value="1.80 A"/>
    <property type="chains" value="A/B=1-88"/>
</dbReference>
<dbReference type="PDBsum" id="1LUZ"/>
<dbReference type="SMR" id="P18378"/>
<dbReference type="BioGRID" id="3509003">
    <property type="interactions" value="1"/>
</dbReference>
<dbReference type="DNASU" id="3707649"/>
<dbReference type="GeneID" id="3707649"/>
<dbReference type="KEGG" id="vg:3707649"/>
<dbReference type="EvolutionaryTrace" id="P18378"/>
<dbReference type="Proteomes" id="UP000000344">
    <property type="component" value="Genome"/>
</dbReference>
<dbReference type="GO" id="GO:0005737">
    <property type="term" value="C:cytoplasm"/>
    <property type="evidence" value="ECO:0000305"/>
    <property type="project" value="UniProt"/>
</dbReference>
<dbReference type="GO" id="GO:0030414">
    <property type="term" value="F:peptidase inhibitor activity"/>
    <property type="evidence" value="ECO:0007669"/>
    <property type="project" value="InterPro"/>
</dbReference>
<dbReference type="GO" id="GO:0140311">
    <property type="term" value="F:protein sequestering activity"/>
    <property type="evidence" value="ECO:0000314"/>
    <property type="project" value="UniProt"/>
</dbReference>
<dbReference type="GO" id="GO:0030291">
    <property type="term" value="F:protein serine/threonine kinase inhibitor activity"/>
    <property type="evidence" value="ECO:0007669"/>
    <property type="project" value="UniProtKB-KW"/>
</dbReference>
<dbReference type="GO" id="GO:0003723">
    <property type="term" value="F:RNA binding"/>
    <property type="evidence" value="ECO:0007669"/>
    <property type="project" value="UniProtKB-KW"/>
</dbReference>
<dbReference type="GO" id="GO:0052170">
    <property type="term" value="P:symbiont-mediated suppression of host innate immune response"/>
    <property type="evidence" value="ECO:0007669"/>
    <property type="project" value="UniProtKB-KW"/>
</dbReference>
<dbReference type="GO" id="GO:0039580">
    <property type="term" value="P:symbiont-mediated suppression of host PKR/eIFalpha signaling"/>
    <property type="evidence" value="ECO:0000314"/>
    <property type="project" value="UniProt"/>
</dbReference>
<dbReference type="GO" id="GO:0039502">
    <property type="term" value="P:symbiont-mediated suppression of host type I interferon-mediated signaling pathway"/>
    <property type="evidence" value="ECO:0007669"/>
    <property type="project" value="UniProtKB-KW"/>
</dbReference>
<dbReference type="Gene3D" id="2.40.50.140">
    <property type="entry name" value="Nucleic acid-binding proteins"/>
    <property type="match status" value="1"/>
</dbReference>
<dbReference type="InterPro" id="IPR016397">
    <property type="entry name" value="K3-like_poxvir"/>
</dbReference>
<dbReference type="InterPro" id="IPR012340">
    <property type="entry name" value="NA-bd_OB-fold"/>
</dbReference>
<dbReference type="InterPro" id="IPR003029">
    <property type="entry name" value="S1_domain"/>
</dbReference>
<dbReference type="Pfam" id="PF00575">
    <property type="entry name" value="S1"/>
    <property type="match status" value="1"/>
</dbReference>
<dbReference type="PIRSF" id="PIRSF003760">
    <property type="entry name" value="VAC_K3L_Serpin_prd"/>
    <property type="match status" value="1"/>
</dbReference>
<dbReference type="SMART" id="SM00316">
    <property type="entry name" value="S1"/>
    <property type="match status" value="1"/>
</dbReference>
<dbReference type="SUPFAM" id="SSF50249">
    <property type="entry name" value="Nucleic acid-binding proteins"/>
    <property type="match status" value="1"/>
</dbReference>
<evidence type="ECO:0000269" key="1">
    <source>
    </source>
</evidence>
<evidence type="ECO:0000269" key="2">
    <source>
    </source>
</evidence>
<evidence type="ECO:0000269" key="3">
    <source>
    </source>
</evidence>
<evidence type="ECO:0000269" key="4">
    <source>
    </source>
</evidence>
<evidence type="ECO:0000269" key="5">
    <source>
    </source>
</evidence>
<evidence type="ECO:0000305" key="6"/>
<evidence type="ECO:0007829" key="7">
    <source>
        <dbReference type="PDB" id="1LUZ"/>
    </source>
</evidence>
<accession>P18378</accession>
<accession>Q76ZX7</accession>